<sequence length="394" mass="44824">MEQTWRWYGPNDPVSLADVRQAGATGVVTALHHIPNGEVWSVEEILKRKAIVEDAGLVWSVVESVPIHEDIKTHTGNYEQWIANYQQTLRNLAQCGIRTVCYNFMPVLDWTRTDLEYVLPDGSKALRFDQIEFAAFEMHILKRPGAEADYTEEEIAQAAERFATMSDEDKARLTRNIIAGLPGAEEGYTLDQFRKHLELYKDIDKAKLRENFAVFLKAIIPVAEEVGVRMAVHPDDPPRPILGLPRIVSTIEDMQWMVDTVNSMANGFTMCTGSYGVRADNDLVDMIKQFGPRIYFTHLRSTMREDNPKTFHEAAHLNGDVDMYEVVKAIVEEEHRRKAEGKEDLIPMRPDHGHQMLDDLKKKTNPGYSAIGRLKGLAEVRGVELAIQRAFFSR</sequence>
<reference key="1">
    <citation type="journal article" date="2002" name="Nucleic Acids Res.">
        <title>Genome sequence of Shigella flexneri 2a: insights into pathogenicity through comparison with genomes of Escherichia coli K12 and O157.</title>
        <authorList>
            <person name="Jin Q."/>
            <person name="Yuan Z."/>
            <person name="Xu J."/>
            <person name="Wang Y."/>
            <person name="Shen Y."/>
            <person name="Lu W."/>
            <person name="Wang J."/>
            <person name="Liu H."/>
            <person name="Yang J."/>
            <person name="Yang F."/>
            <person name="Zhang X."/>
            <person name="Zhang J."/>
            <person name="Yang G."/>
            <person name="Wu H."/>
            <person name="Qu D."/>
            <person name="Dong J."/>
            <person name="Sun L."/>
            <person name="Xue Y."/>
            <person name="Zhao A."/>
            <person name="Gao Y."/>
            <person name="Zhu J."/>
            <person name="Kan B."/>
            <person name="Ding K."/>
            <person name="Chen S."/>
            <person name="Cheng H."/>
            <person name="Yao Z."/>
            <person name="He B."/>
            <person name="Chen R."/>
            <person name="Ma D."/>
            <person name="Qiang B."/>
            <person name="Wen Y."/>
            <person name="Hou Y."/>
            <person name="Yu J."/>
        </authorList>
    </citation>
    <scope>NUCLEOTIDE SEQUENCE [LARGE SCALE GENOMIC DNA]</scope>
    <source>
        <strain>301 / Serotype 2a</strain>
    </source>
</reference>
<reference key="2">
    <citation type="journal article" date="2003" name="Infect. Immun.">
        <title>Complete genome sequence and comparative genomics of Shigella flexneri serotype 2a strain 2457T.</title>
        <authorList>
            <person name="Wei J."/>
            <person name="Goldberg M.B."/>
            <person name="Burland V."/>
            <person name="Venkatesan M.M."/>
            <person name="Deng W."/>
            <person name="Fournier G."/>
            <person name="Mayhew G.F."/>
            <person name="Plunkett G. III"/>
            <person name="Rose D.J."/>
            <person name="Darling A."/>
            <person name="Mau B."/>
            <person name="Perna N.T."/>
            <person name="Payne S.M."/>
            <person name="Runyen-Janecky L.J."/>
            <person name="Zhou S."/>
            <person name="Schwartz D.C."/>
            <person name="Blattner F.R."/>
        </authorList>
    </citation>
    <scope>NUCLEOTIDE SEQUENCE [LARGE SCALE GENOMIC DNA]</scope>
    <source>
        <strain>ATCC 700930 / 2457T / Serotype 2a</strain>
    </source>
</reference>
<accession>P0A4S0</accession>
<accession>P59592</accession>
<proteinExistence type="inferred from homology"/>
<comment type="function">
    <text evidence="1">Catalyzes the dehydration of D-mannonate.</text>
</comment>
<comment type="catalytic activity">
    <reaction>
        <text>D-mannonate = 2-dehydro-3-deoxy-D-gluconate + H2O</text>
        <dbReference type="Rhea" id="RHEA:20097"/>
        <dbReference type="ChEBI" id="CHEBI:15377"/>
        <dbReference type="ChEBI" id="CHEBI:17767"/>
        <dbReference type="ChEBI" id="CHEBI:57990"/>
        <dbReference type="EC" id="4.2.1.8"/>
    </reaction>
</comment>
<comment type="cofactor">
    <cofactor evidence="1">
        <name>Fe(2+)</name>
        <dbReference type="ChEBI" id="CHEBI:29033"/>
    </cofactor>
    <cofactor evidence="1">
        <name>Mn(2+)</name>
        <dbReference type="ChEBI" id="CHEBI:29035"/>
    </cofactor>
</comment>
<comment type="pathway">
    <text>Carbohydrate metabolism; pentose and glucuronate interconversion.</text>
</comment>
<comment type="similarity">
    <text evidence="2">Belongs to the mannonate dehydratase family.</text>
</comment>
<dbReference type="EC" id="4.2.1.8"/>
<dbReference type="EMBL" id="AE005674">
    <property type="protein sequence ID" value="AAN45619.2"/>
    <property type="molecule type" value="Genomic_DNA"/>
</dbReference>
<dbReference type="EMBL" id="AE014073">
    <property type="protein sequence ID" value="AAP19404.1"/>
    <property type="molecule type" value="Genomic_DNA"/>
</dbReference>
<dbReference type="RefSeq" id="NP_709912.2">
    <property type="nucleotide sequence ID" value="NC_004337.2"/>
</dbReference>
<dbReference type="RefSeq" id="WP_000438582.1">
    <property type="nucleotide sequence ID" value="NZ_WHSI01000089.1"/>
</dbReference>
<dbReference type="SMR" id="P0A4S0"/>
<dbReference type="STRING" id="198214.SF4198"/>
<dbReference type="PaxDb" id="198214-SF4198"/>
<dbReference type="GeneID" id="1025400"/>
<dbReference type="GeneID" id="93777517"/>
<dbReference type="KEGG" id="sfl:SF4198"/>
<dbReference type="KEGG" id="sfx:S4454"/>
<dbReference type="PATRIC" id="fig|198214.7.peg.4953"/>
<dbReference type="HOGENOM" id="CLU_058621_2_0_6"/>
<dbReference type="UniPathway" id="UPA00246"/>
<dbReference type="Proteomes" id="UP000001006">
    <property type="component" value="Chromosome"/>
</dbReference>
<dbReference type="Proteomes" id="UP000002673">
    <property type="component" value="Chromosome"/>
</dbReference>
<dbReference type="GO" id="GO:0008198">
    <property type="term" value="F:ferrous iron binding"/>
    <property type="evidence" value="ECO:0007669"/>
    <property type="project" value="TreeGrafter"/>
</dbReference>
<dbReference type="GO" id="GO:0030145">
    <property type="term" value="F:manganese ion binding"/>
    <property type="evidence" value="ECO:0007669"/>
    <property type="project" value="TreeGrafter"/>
</dbReference>
<dbReference type="GO" id="GO:0008927">
    <property type="term" value="F:mannonate dehydratase activity"/>
    <property type="evidence" value="ECO:0007669"/>
    <property type="project" value="UniProtKB-UniRule"/>
</dbReference>
<dbReference type="GO" id="GO:0042840">
    <property type="term" value="P:D-glucuronate catabolic process"/>
    <property type="evidence" value="ECO:0007669"/>
    <property type="project" value="TreeGrafter"/>
</dbReference>
<dbReference type="FunFam" id="3.20.20.150:FF:000004">
    <property type="entry name" value="Mannonate dehydratase"/>
    <property type="match status" value="1"/>
</dbReference>
<dbReference type="FunFam" id="3.20.20.150:FF:000005">
    <property type="entry name" value="Mannonate dehydratase"/>
    <property type="match status" value="1"/>
</dbReference>
<dbReference type="Gene3D" id="3.20.20.150">
    <property type="entry name" value="Divalent-metal-dependent TIM barrel enzymes"/>
    <property type="match status" value="2"/>
</dbReference>
<dbReference type="HAMAP" id="MF_00106">
    <property type="entry name" value="UxuA"/>
    <property type="match status" value="1"/>
</dbReference>
<dbReference type="InterPro" id="IPR004628">
    <property type="entry name" value="Man_deHydtase"/>
</dbReference>
<dbReference type="InterPro" id="IPR036237">
    <property type="entry name" value="Xyl_isomerase-like_sf"/>
</dbReference>
<dbReference type="NCBIfam" id="NF003027">
    <property type="entry name" value="PRK03906.1"/>
    <property type="match status" value="1"/>
</dbReference>
<dbReference type="NCBIfam" id="TIGR00695">
    <property type="entry name" value="uxuA"/>
    <property type="match status" value="1"/>
</dbReference>
<dbReference type="PANTHER" id="PTHR30387">
    <property type="entry name" value="MANNONATE DEHYDRATASE"/>
    <property type="match status" value="1"/>
</dbReference>
<dbReference type="PANTHER" id="PTHR30387:SF2">
    <property type="entry name" value="MANNONATE DEHYDRATASE"/>
    <property type="match status" value="1"/>
</dbReference>
<dbReference type="Pfam" id="PF03786">
    <property type="entry name" value="UxuA"/>
    <property type="match status" value="1"/>
</dbReference>
<dbReference type="PIRSF" id="PIRSF016049">
    <property type="entry name" value="Man_dehyd"/>
    <property type="match status" value="1"/>
</dbReference>
<dbReference type="SUPFAM" id="SSF51658">
    <property type="entry name" value="Xylose isomerase-like"/>
    <property type="match status" value="1"/>
</dbReference>
<keyword id="KW-0408">Iron</keyword>
<keyword id="KW-0456">Lyase</keyword>
<keyword id="KW-0464">Manganese</keyword>
<keyword id="KW-1185">Reference proteome</keyword>
<gene>
    <name type="primary">uxuA</name>
    <name type="ordered locus">SF4198</name>
    <name type="ordered locus">S4454</name>
</gene>
<protein>
    <recommendedName>
        <fullName>Mannonate dehydratase</fullName>
        <ecNumber>4.2.1.8</ecNumber>
    </recommendedName>
    <alternativeName>
        <fullName>D-mannonate hydro-lyase</fullName>
    </alternativeName>
</protein>
<name>UXUA_SHIFL</name>
<feature type="chain" id="PRO_0000170686" description="Mannonate dehydratase">
    <location>
        <begin position="1"/>
        <end position="394"/>
    </location>
</feature>
<feature type="sequence conflict" description="In Ref. 2; AAP19404." evidence="2" ref="2">
    <original>E</original>
    <variation>K</variation>
    <location>
        <position position="325"/>
    </location>
</feature>
<evidence type="ECO:0000250" key="1"/>
<evidence type="ECO:0000305" key="2"/>
<organism>
    <name type="scientific">Shigella flexneri</name>
    <dbReference type="NCBI Taxonomy" id="623"/>
    <lineage>
        <taxon>Bacteria</taxon>
        <taxon>Pseudomonadati</taxon>
        <taxon>Pseudomonadota</taxon>
        <taxon>Gammaproteobacteria</taxon>
        <taxon>Enterobacterales</taxon>
        <taxon>Enterobacteriaceae</taxon>
        <taxon>Shigella</taxon>
    </lineage>
</organism>